<keyword id="KW-0426">Late protein</keyword>
<keyword id="KW-0946">Virion</keyword>
<dbReference type="EMBL" id="AY261366">
    <property type="status" value="NOT_ANNOTATED_CDS"/>
    <property type="molecule type" value="Genomic_DNA"/>
</dbReference>
<dbReference type="Proteomes" id="UP000000858">
    <property type="component" value="Segment"/>
</dbReference>
<dbReference type="GO" id="GO:0044423">
    <property type="term" value="C:virion component"/>
    <property type="evidence" value="ECO:0007669"/>
    <property type="project" value="UniProtKB-KW"/>
</dbReference>
<dbReference type="InterPro" id="IPR011009">
    <property type="entry name" value="Kinase-like_dom_sf"/>
</dbReference>
<dbReference type="SUPFAM" id="SSF56112">
    <property type="entry name" value="Protein kinase-like (PK-like)"/>
    <property type="match status" value="1"/>
</dbReference>
<sequence length="717" mass="83646">MTKLAQWMFEQYVKDLNLKNRGSPSFRKWLTLQPSLLRYSGVMRANAFDILKYGYPMQQSGYTVATLEIHFKNIRSSFANIYWNRDSEEPEYVCCCATYQSHDGEYRYRFVWYQPFIEAYNAIEAALDPLETIILNLIAARDLDFVVHIFPYNKGHEDYLASTQLILKIFIATLLMDILRIKDNTLDVHLNSDYIIVMERLWPHIKDAIEHFFEAHKDLLGYLIAFRNGGNFAGSLRPSCGQKIVPLTIREALQMNDINLAVWREVFIMQECSDLVINGIAPCFPIFNTWTYLQGINQIFFENTSLQEKFKKDFIARELSKEIIKGQKTLNDKEFKKLSLHQIQYMESFLLMSDVAIMITTEYVGYTLQSLPGIISRSSYLSPIVKNILMDEDSFMSLLFDLCYGAYVLHKKENVIHADLHLNNMTYYHFNPTSFTDRNKPGKYTLKVKNPVIAFITGPKVETETYVFKHIDGFGCIIDFSRAIMGPNHAIKLERQYGLAFVNTFYRNQSEHILKVLRFYFPEMLTNRENEIQGVILSNFNFFFNSITAIDFYAIARNLRSMLSLDYLHTSEVKRNVEISQTFLDTCQFLEEKAVEFLFKNLHTVLSGKPVEKTAGDVLLPIVFKKFLYPNIPKNILRSFTVIDVYNYNNIKRYSGKAIQTFPPWAQTKEILTHAEGRTFEDIFPRGELVFKKAYAENNHLDKILQRIREQLANENL</sequence>
<feature type="chain" id="PRO_0000373724" description="Uncharacterized protein C717R">
    <location>
        <begin position="1"/>
        <end position="717"/>
    </location>
</feature>
<reference key="1">
    <citation type="submission" date="2003-03" db="EMBL/GenBank/DDBJ databases">
        <title>African swine fever virus genomes.</title>
        <authorList>
            <person name="Kutish G.F."/>
            <person name="Rock D.L."/>
        </authorList>
    </citation>
    <scope>NUCLEOTIDE SEQUENCE [LARGE SCALE GENOMIC DNA]</scope>
</reference>
<name>VF717_ASFWA</name>
<accession>P0CAJ8</accession>
<protein>
    <recommendedName>
        <fullName>Uncharacterized protein C717R</fullName>
        <shortName>pC717R</shortName>
    </recommendedName>
</protein>
<proteinExistence type="inferred from homology"/>
<gene>
    <name type="ordered locus">War-074</name>
</gene>
<organismHost>
    <name type="scientific">Ornithodoros</name>
    <name type="common">relapsing fever ticks</name>
    <dbReference type="NCBI Taxonomy" id="6937"/>
</organismHost>
<organismHost>
    <name type="scientific">Phacochoerus aethiopicus</name>
    <name type="common">Warthog</name>
    <dbReference type="NCBI Taxonomy" id="85517"/>
</organismHost>
<organismHost>
    <name type="scientific">Phacochoerus africanus</name>
    <name type="common">Warthog</name>
    <dbReference type="NCBI Taxonomy" id="41426"/>
</organismHost>
<organismHost>
    <name type="scientific">Potamochoerus larvatus</name>
    <name type="common">Bushpig</name>
    <dbReference type="NCBI Taxonomy" id="273792"/>
</organismHost>
<organismHost>
    <name type="scientific">Sus scrofa</name>
    <name type="common">Pig</name>
    <dbReference type="NCBI Taxonomy" id="9823"/>
</organismHost>
<organism>
    <name type="scientific">African swine fever virus (isolate Warthog/Namibia/Wart80/1980)</name>
    <name type="common">ASFV</name>
    <dbReference type="NCBI Taxonomy" id="561444"/>
    <lineage>
        <taxon>Viruses</taxon>
        <taxon>Varidnaviria</taxon>
        <taxon>Bamfordvirae</taxon>
        <taxon>Nucleocytoviricota</taxon>
        <taxon>Pokkesviricetes</taxon>
        <taxon>Asfuvirales</taxon>
        <taxon>Asfarviridae</taxon>
        <taxon>Asfivirus</taxon>
        <taxon>African swine fever virus</taxon>
    </lineage>
</organism>
<comment type="subcellular location">
    <subcellularLocation>
        <location evidence="1">Virion</location>
    </subcellularLocation>
</comment>
<comment type="induction">
    <text evidence="2">Expressed in the late phase of the viral replicative cycle.</text>
</comment>
<comment type="similarity">
    <text evidence="2">Belongs to the asfivirus C717R family.</text>
</comment>
<evidence type="ECO:0000250" key="1">
    <source>
        <dbReference type="UniProtKB" id="Q65156"/>
    </source>
</evidence>
<evidence type="ECO:0000305" key="2"/>